<feature type="chain" id="PRO_0000104708" description="Large ribosomal subunit protein uL15">
    <location>
        <begin position="1"/>
        <end position="144"/>
    </location>
</feature>
<feature type="region of interest" description="Disordered" evidence="2">
    <location>
        <begin position="1"/>
        <end position="58"/>
    </location>
</feature>
<feature type="compositionally biased region" description="Gly residues" evidence="2">
    <location>
        <begin position="21"/>
        <end position="31"/>
    </location>
</feature>
<reference key="1">
    <citation type="journal article" date="2005" name="Proc. Natl. Acad. Sci. U.S.A.">
        <title>The psychrophilic lifestyle as revealed by the genome sequence of Colwellia psychrerythraea 34H through genomic and proteomic analyses.</title>
        <authorList>
            <person name="Methe B.A."/>
            <person name="Nelson K.E."/>
            <person name="Deming J.W."/>
            <person name="Momen B."/>
            <person name="Melamud E."/>
            <person name="Zhang X."/>
            <person name="Moult J."/>
            <person name="Madupu R."/>
            <person name="Nelson W.C."/>
            <person name="Dodson R.J."/>
            <person name="Brinkac L.M."/>
            <person name="Daugherty S.C."/>
            <person name="Durkin A.S."/>
            <person name="DeBoy R.T."/>
            <person name="Kolonay J.F."/>
            <person name="Sullivan S.A."/>
            <person name="Zhou L."/>
            <person name="Davidsen T.M."/>
            <person name="Wu M."/>
            <person name="Huston A.L."/>
            <person name="Lewis M."/>
            <person name="Weaver B."/>
            <person name="Weidman J.F."/>
            <person name="Khouri H."/>
            <person name="Utterback T.R."/>
            <person name="Feldblyum T.V."/>
            <person name="Fraser C.M."/>
        </authorList>
    </citation>
    <scope>NUCLEOTIDE SEQUENCE [LARGE SCALE GENOMIC DNA]</scope>
    <source>
        <strain>34H / ATCC BAA-681</strain>
    </source>
</reference>
<dbReference type="EMBL" id="CP000083">
    <property type="protein sequence ID" value="AAZ26195.1"/>
    <property type="molecule type" value="Genomic_DNA"/>
</dbReference>
<dbReference type="RefSeq" id="WP_011041470.1">
    <property type="nucleotide sequence ID" value="NC_003910.7"/>
</dbReference>
<dbReference type="SMR" id="Q488Z4"/>
<dbReference type="STRING" id="167879.CPS_0620"/>
<dbReference type="KEGG" id="cps:CPS_0620"/>
<dbReference type="eggNOG" id="COG0200">
    <property type="taxonomic scope" value="Bacteria"/>
</dbReference>
<dbReference type="HOGENOM" id="CLU_055188_4_2_6"/>
<dbReference type="Proteomes" id="UP000000547">
    <property type="component" value="Chromosome"/>
</dbReference>
<dbReference type="GO" id="GO:0022625">
    <property type="term" value="C:cytosolic large ribosomal subunit"/>
    <property type="evidence" value="ECO:0007669"/>
    <property type="project" value="TreeGrafter"/>
</dbReference>
<dbReference type="GO" id="GO:0019843">
    <property type="term" value="F:rRNA binding"/>
    <property type="evidence" value="ECO:0007669"/>
    <property type="project" value="UniProtKB-UniRule"/>
</dbReference>
<dbReference type="GO" id="GO:0003735">
    <property type="term" value="F:structural constituent of ribosome"/>
    <property type="evidence" value="ECO:0007669"/>
    <property type="project" value="InterPro"/>
</dbReference>
<dbReference type="GO" id="GO:0006412">
    <property type="term" value="P:translation"/>
    <property type="evidence" value="ECO:0007669"/>
    <property type="project" value="UniProtKB-UniRule"/>
</dbReference>
<dbReference type="Gene3D" id="3.100.10.10">
    <property type="match status" value="1"/>
</dbReference>
<dbReference type="HAMAP" id="MF_01341">
    <property type="entry name" value="Ribosomal_uL15"/>
    <property type="match status" value="1"/>
</dbReference>
<dbReference type="InterPro" id="IPR030878">
    <property type="entry name" value="Ribosomal_uL15"/>
</dbReference>
<dbReference type="InterPro" id="IPR021131">
    <property type="entry name" value="Ribosomal_uL15/eL18"/>
</dbReference>
<dbReference type="InterPro" id="IPR036227">
    <property type="entry name" value="Ribosomal_uL15/eL18_sf"/>
</dbReference>
<dbReference type="InterPro" id="IPR005749">
    <property type="entry name" value="Ribosomal_uL15_bac-type"/>
</dbReference>
<dbReference type="InterPro" id="IPR001196">
    <property type="entry name" value="Ribosomal_uL15_CS"/>
</dbReference>
<dbReference type="NCBIfam" id="TIGR01071">
    <property type="entry name" value="rplO_bact"/>
    <property type="match status" value="1"/>
</dbReference>
<dbReference type="PANTHER" id="PTHR12934">
    <property type="entry name" value="50S RIBOSOMAL PROTEIN L15"/>
    <property type="match status" value="1"/>
</dbReference>
<dbReference type="PANTHER" id="PTHR12934:SF11">
    <property type="entry name" value="LARGE RIBOSOMAL SUBUNIT PROTEIN UL15M"/>
    <property type="match status" value="1"/>
</dbReference>
<dbReference type="Pfam" id="PF00828">
    <property type="entry name" value="Ribosomal_L27A"/>
    <property type="match status" value="1"/>
</dbReference>
<dbReference type="SUPFAM" id="SSF52080">
    <property type="entry name" value="Ribosomal proteins L15p and L18e"/>
    <property type="match status" value="1"/>
</dbReference>
<dbReference type="PROSITE" id="PS00475">
    <property type="entry name" value="RIBOSOMAL_L15"/>
    <property type="match status" value="1"/>
</dbReference>
<protein>
    <recommendedName>
        <fullName evidence="1">Large ribosomal subunit protein uL15</fullName>
    </recommendedName>
    <alternativeName>
        <fullName evidence="3">50S ribosomal protein L15</fullName>
    </alternativeName>
</protein>
<evidence type="ECO:0000255" key="1">
    <source>
        <dbReference type="HAMAP-Rule" id="MF_01341"/>
    </source>
</evidence>
<evidence type="ECO:0000256" key="2">
    <source>
        <dbReference type="SAM" id="MobiDB-lite"/>
    </source>
</evidence>
<evidence type="ECO:0000305" key="3"/>
<gene>
    <name evidence="1" type="primary">rplO</name>
    <name type="ordered locus">CPS_0620</name>
</gene>
<sequence>MHLNTLSPAPGSHKARKRCGRGIGSGIGKTGGRGHKGQKSRSGGSVRPGFEGGQMPLKQRLPKFGFTSRKSLVRAEVRLHELNLITGDVVDIHALKDAGLITRNIVAVKVMLSGEITRPITLRGIAVTKGAQAAIEAAGGKVEE</sequence>
<keyword id="KW-0687">Ribonucleoprotein</keyword>
<keyword id="KW-0689">Ribosomal protein</keyword>
<keyword id="KW-0694">RNA-binding</keyword>
<keyword id="KW-0699">rRNA-binding</keyword>
<name>RL15_COLP3</name>
<proteinExistence type="inferred from homology"/>
<organism>
    <name type="scientific">Colwellia psychrerythraea (strain 34H / ATCC BAA-681)</name>
    <name type="common">Vibrio psychroerythus</name>
    <dbReference type="NCBI Taxonomy" id="167879"/>
    <lineage>
        <taxon>Bacteria</taxon>
        <taxon>Pseudomonadati</taxon>
        <taxon>Pseudomonadota</taxon>
        <taxon>Gammaproteobacteria</taxon>
        <taxon>Alteromonadales</taxon>
        <taxon>Colwelliaceae</taxon>
        <taxon>Colwellia</taxon>
    </lineage>
</organism>
<accession>Q488Z4</accession>
<comment type="function">
    <text evidence="1">Binds to the 23S rRNA.</text>
</comment>
<comment type="subunit">
    <text evidence="1">Part of the 50S ribosomal subunit.</text>
</comment>
<comment type="similarity">
    <text evidence="1">Belongs to the universal ribosomal protein uL15 family.</text>
</comment>